<name>HPRT_METPS</name>
<protein>
    <recommendedName>
        <fullName evidence="1">Hypoxanthine/guanine phosphoribosyltransferase</fullName>
        <shortName evidence="1">HGPRTase</shortName>
        <ecNumber evidence="1">2.4.2.8</ecNumber>
    </recommendedName>
</protein>
<comment type="function">
    <text evidence="1">Catalyzes a salvage reaction resulting in the formation of IMP that is energically less costly than de novo synthesis.</text>
</comment>
<comment type="catalytic activity">
    <reaction evidence="1">
        <text>IMP + diphosphate = hypoxanthine + 5-phospho-alpha-D-ribose 1-diphosphate</text>
        <dbReference type="Rhea" id="RHEA:17973"/>
        <dbReference type="ChEBI" id="CHEBI:17368"/>
        <dbReference type="ChEBI" id="CHEBI:33019"/>
        <dbReference type="ChEBI" id="CHEBI:58017"/>
        <dbReference type="ChEBI" id="CHEBI:58053"/>
        <dbReference type="EC" id="2.4.2.8"/>
    </reaction>
</comment>
<comment type="catalytic activity">
    <reaction evidence="1">
        <text>GMP + diphosphate = guanine + 5-phospho-alpha-D-ribose 1-diphosphate</text>
        <dbReference type="Rhea" id="RHEA:25424"/>
        <dbReference type="ChEBI" id="CHEBI:16235"/>
        <dbReference type="ChEBI" id="CHEBI:33019"/>
        <dbReference type="ChEBI" id="CHEBI:58017"/>
        <dbReference type="ChEBI" id="CHEBI:58115"/>
        <dbReference type="EC" id="2.4.2.8"/>
    </reaction>
</comment>
<comment type="pathway">
    <text evidence="1">Purine metabolism; IMP biosynthesis via salvage pathway; IMP from hypoxanthine: step 1/1.</text>
</comment>
<comment type="subunit">
    <text evidence="1">Homodimer.</text>
</comment>
<comment type="subcellular location">
    <subcellularLocation>
        <location evidence="1">Cytoplasm</location>
    </subcellularLocation>
</comment>
<comment type="similarity">
    <text evidence="1">Belongs to the purine/pyrimidine phosphoribosyltransferase family. Archaeal HPRT subfamily.</text>
</comment>
<keyword id="KW-0963">Cytoplasm</keyword>
<keyword id="KW-0328">Glycosyltransferase</keyword>
<keyword id="KW-0660">Purine salvage</keyword>
<keyword id="KW-0808">Transferase</keyword>
<dbReference type="EC" id="2.4.2.8" evidence="1"/>
<dbReference type="EMBL" id="AP011532">
    <property type="protein sequence ID" value="BAI60472.1"/>
    <property type="molecule type" value="Genomic_DNA"/>
</dbReference>
<dbReference type="RefSeq" id="WP_012899152.1">
    <property type="nucleotide sequence ID" value="NC_013665.1"/>
</dbReference>
<dbReference type="SMR" id="D1YVK0"/>
<dbReference type="FunCoup" id="D1YVK0">
    <property type="interactions" value="47"/>
</dbReference>
<dbReference type="STRING" id="304371.MCP_0400"/>
<dbReference type="GeneID" id="8682961"/>
<dbReference type="KEGG" id="mpd:MCP_0400"/>
<dbReference type="PATRIC" id="fig|304371.9.peg.410"/>
<dbReference type="eggNOG" id="arCOG00030">
    <property type="taxonomic scope" value="Archaea"/>
</dbReference>
<dbReference type="InParanoid" id="D1YVK0"/>
<dbReference type="OrthoDB" id="8323at2157"/>
<dbReference type="UniPathway" id="UPA00591">
    <property type="reaction ID" value="UER00648"/>
</dbReference>
<dbReference type="Proteomes" id="UP000001882">
    <property type="component" value="Chromosome"/>
</dbReference>
<dbReference type="GO" id="GO:0005737">
    <property type="term" value="C:cytoplasm"/>
    <property type="evidence" value="ECO:0007669"/>
    <property type="project" value="UniProtKB-SubCell"/>
</dbReference>
<dbReference type="GO" id="GO:0052657">
    <property type="term" value="F:guanine phosphoribosyltransferase activity"/>
    <property type="evidence" value="ECO:0007669"/>
    <property type="project" value="RHEA"/>
</dbReference>
<dbReference type="GO" id="GO:0004422">
    <property type="term" value="F:hypoxanthine phosphoribosyltransferase activity"/>
    <property type="evidence" value="ECO:0007669"/>
    <property type="project" value="UniProtKB-UniRule"/>
</dbReference>
<dbReference type="GO" id="GO:0032264">
    <property type="term" value="P:IMP salvage"/>
    <property type="evidence" value="ECO:0007669"/>
    <property type="project" value="UniProtKB-UniRule"/>
</dbReference>
<dbReference type="GO" id="GO:0006166">
    <property type="term" value="P:purine ribonucleoside salvage"/>
    <property type="evidence" value="ECO:0007669"/>
    <property type="project" value="UniProtKB-KW"/>
</dbReference>
<dbReference type="CDD" id="cd06223">
    <property type="entry name" value="PRTases_typeI"/>
    <property type="match status" value="1"/>
</dbReference>
<dbReference type="Gene3D" id="3.40.50.2020">
    <property type="match status" value="1"/>
</dbReference>
<dbReference type="HAMAP" id="MF_01467">
    <property type="entry name" value="Hypx_phosphoribosyltr"/>
    <property type="match status" value="1"/>
</dbReference>
<dbReference type="InterPro" id="IPR026597">
    <property type="entry name" value="HGPRTase-like"/>
</dbReference>
<dbReference type="InterPro" id="IPR000836">
    <property type="entry name" value="PRibTrfase_dom"/>
</dbReference>
<dbReference type="InterPro" id="IPR029057">
    <property type="entry name" value="PRTase-like"/>
</dbReference>
<dbReference type="InterPro" id="IPR050118">
    <property type="entry name" value="Pur/Pyrimidine_PRTase"/>
</dbReference>
<dbReference type="NCBIfam" id="NF040646">
    <property type="entry name" value="HPT_Archaea"/>
    <property type="match status" value="1"/>
</dbReference>
<dbReference type="NCBIfam" id="NF002635">
    <property type="entry name" value="PRK02304.1-4"/>
    <property type="match status" value="1"/>
</dbReference>
<dbReference type="PANTHER" id="PTHR43864">
    <property type="entry name" value="HYPOXANTHINE/GUANINE PHOSPHORIBOSYLTRANSFERASE"/>
    <property type="match status" value="1"/>
</dbReference>
<dbReference type="PANTHER" id="PTHR43864:SF1">
    <property type="entry name" value="XANTHINE PHOSPHORIBOSYLTRANSFERASE"/>
    <property type="match status" value="1"/>
</dbReference>
<dbReference type="Pfam" id="PF00156">
    <property type="entry name" value="Pribosyltran"/>
    <property type="match status" value="1"/>
</dbReference>
<dbReference type="SUPFAM" id="SSF53271">
    <property type="entry name" value="PRTase-like"/>
    <property type="match status" value="1"/>
</dbReference>
<dbReference type="PROSITE" id="PS00103">
    <property type="entry name" value="PUR_PYR_PR_TRANSFER"/>
    <property type="match status" value="1"/>
</dbReference>
<feature type="chain" id="PRO_0000415470" description="Hypoxanthine/guanine phosphoribosyltransferase">
    <location>
        <begin position="1"/>
        <end position="191"/>
    </location>
</feature>
<evidence type="ECO:0000255" key="1">
    <source>
        <dbReference type="HAMAP-Rule" id="MF_01467"/>
    </source>
</evidence>
<sequence>MLKNLRETMRTAPIVRRGTYNYFIHPISDGVPVVKPELLREVIACMVKNADLDVDKIVTIEAMGLPLGAALSTMTDIPFIIIRKRKYELPGEIAVHQTTGYSRGELYLNGINKGDRVLIIDDVISTGGTMKAVIKALEKAGAVIKDIVVVIERGDGKKSIEELGYDVQTLIKIDVDENGVKILGCIDEECQ</sequence>
<accession>D1YVK0</accession>
<organism>
    <name type="scientific">Methanocella paludicola (strain DSM 17711 / JCM 13418 / NBRC 101707 / SANAE)</name>
    <dbReference type="NCBI Taxonomy" id="304371"/>
    <lineage>
        <taxon>Archaea</taxon>
        <taxon>Methanobacteriati</taxon>
        <taxon>Methanobacteriota</taxon>
        <taxon>Stenosarchaea group</taxon>
        <taxon>Methanomicrobia</taxon>
        <taxon>Methanocellales</taxon>
        <taxon>Methanocellaceae</taxon>
        <taxon>Methanocella</taxon>
    </lineage>
</organism>
<gene>
    <name evidence="1" type="primary">hpt</name>
    <name type="ordered locus">MCP_0400</name>
</gene>
<reference key="1">
    <citation type="journal article" date="2011" name="PLoS ONE">
        <title>Genome sequence of a mesophilic hydrogenotrophic methanogen Methanocella paludicola, the first cultivated representative of the order Methanocellales.</title>
        <authorList>
            <person name="Sakai S."/>
            <person name="Takaki Y."/>
            <person name="Shimamura S."/>
            <person name="Sekine M."/>
            <person name="Tajima T."/>
            <person name="Kosugi H."/>
            <person name="Ichikawa N."/>
            <person name="Tasumi E."/>
            <person name="Hiraki A.T."/>
            <person name="Shimizu A."/>
            <person name="Kato Y."/>
            <person name="Nishiko R."/>
            <person name="Mori K."/>
            <person name="Fujita N."/>
            <person name="Imachi H."/>
            <person name="Takai K."/>
        </authorList>
    </citation>
    <scope>NUCLEOTIDE SEQUENCE [LARGE SCALE GENOMIC DNA]</scope>
    <source>
        <strain>DSM 17711 / JCM 13418 / NBRC 101707 / SANAE</strain>
    </source>
</reference>
<proteinExistence type="inferred from homology"/>